<keyword id="KW-0004">4Fe-4S</keyword>
<keyword id="KW-0408">Iron</keyword>
<keyword id="KW-0411">Iron-sulfur</keyword>
<keyword id="KW-0479">Metal-binding</keyword>
<keyword id="KW-0496">Mitochondrion</keyword>
<keyword id="KW-1185">Reference proteome</keyword>
<keyword id="KW-0949">S-adenosyl-L-methionine</keyword>
<keyword id="KW-0808">Transferase</keyword>
<keyword id="KW-0809">Transit peptide</keyword>
<name>LIPA_DEBHA</name>
<proteinExistence type="inferred from homology"/>
<gene>
    <name type="ordered locus">DEHA2G18854g</name>
</gene>
<accession>B5RUV1</accession>
<comment type="function">
    <text evidence="1">Catalyzes the radical-mediated insertion of two sulfur atoms into the C-6 and C-8 positions of the octanoyl moiety bound to the lipoyl domains of lipoate-dependent enzymes, thereby converting the octanoylated domains into lipoylated derivatives.</text>
</comment>
<comment type="catalytic activity">
    <reaction evidence="1">
        <text>[[Fe-S] cluster scaffold protein carrying a second [4Fe-4S](2+) cluster] + N(6)-octanoyl-L-lysyl-[protein] + 2 oxidized [2Fe-2S]-[ferredoxin] + 2 S-adenosyl-L-methionine + 4 H(+) = [[Fe-S] cluster scaffold protein] + N(6)-[(R)-dihydrolipoyl]-L-lysyl-[protein] + 4 Fe(3+) + 2 hydrogen sulfide + 2 5'-deoxyadenosine + 2 L-methionine + 2 reduced [2Fe-2S]-[ferredoxin]</text>
        <dbReference type="Rhea" id="RHEA:16585"/>
        <dbReference type="Rhea" id="RHEA-COMP:9928"/>
        <dbReference type="Rhea" id="RHEA-COMP:10000"/>
        <dbReference type="Rhea" id="RHEA-COMP:10001"/>
        <dbReference type="Rhea" id="RHEA-COMP:10475"/>
        <dbReference type="Rhea" id="RHEA-COMP:14568"/>
        <dbReference type="Rhea" id="RHEA-COMP:14569"/>
        <dbReference type="ChEBI" id="CHEBI:15378"/>
        <dbReference type="ChEBI" id="CHEBI:17319"/>
        <dbReference type="ChEBI" id="CHEBI:29034"/>
        <dbReference type="ChEBI" id="CHEBI:29919"/>
        <dbReference type="ChEBI" id="CHEBI:33722"/>
        <dbReference type="ChEBI" id="CHEBI:33737"/>
        <dbReference type="ChEBI" id="CHEBI:33738"/>
        <dbReference type="ChEBI" id="CHEBI:57844"/>
        <dbReference type="ChEBI" id="CHEBI:59789"/>
        <dbReference type="ChEBI" id="CHEBI:78809"/>
        <dbReference type="ChEBI" id="CHEBI:83100"/>
        <dbReference type="EC" id="2.8.1.8"/>
    </reaction>
</comment>
<comment type="cofactor">
    <cofactor evidence="1">
        <name>[4Fe-4S] cluster</name>
        <dbReference type="ChEBI" id="CHEBI:49883"/>
    </cofactor>
    <text evidence="1">Binds 2 [4Fe-4S] clusters per subunit. One cluster is coordinated with 3 cysteines and an exchangeable S-adenosyl-L-methionine.</text>
</comment>
<comment type="pathway">
    <text evidence="1">Protein modification; protein lipoylation via endogenous pathway; protein N(6)-(lipoyl)lysine from octanoyl-[acyl-carrier-protein]: step 2/2.</text>
</comment>
<comment type="subcellular location">
    <subcellularLocation>
        <location evidence="1">Mitochondrion</location>
    </subcellularLocation>
</comment>
<comment type="similarity">
    <text evidence="1">Belongs to the radical SAM superfamily. Lipoyl synthase family.</text>
</comment>
<evidence type="ECO:0000255" key="1">
    <source>
        <dbReference type="HAMAP-Rule" id="MF_03123"/>
    </source>
</evidence>
<evidence type="ECO:0000255" key="2">
    <source>
        <dbReference type="PROSITE-ProRule" id="PRU01266"/>
    </source>
</evidence>
<protein>
    <recommendedName>
        <fullName evidence="1">Lipoyl synthase, mitochondrial</fullName>
        <ecNumber evidence="1">2.8.1.8</ecNumber>
    </recommendedName>
    <alternativeName>
        <fullName evidence="1">Lipoate synthase</fullName>
        <shortName evidence="1">LS</shortName>
        <shortName evidence="1">Lip-syn</shortName>
    </alternativeName>
    <alternativeName>
        <fullName evidence="1">Lipoic acid synthase</fullName>
    </alternativeName>
</protein>
<organism>
    <name type="scientific">Debaryomyces hansenii (strain ATCC 36239 / CBS 767 / BCRC 21394 / JCM 1990 / NBRC 0083 / IGC 2968)</name>
    <name type="common">Yeast</name>
    <name type="synonym">Torulaspora hansenii</name>
    <dbReference type="NCBI Taxonomy" id="284592"/>
    <lineage>
        <taxon>Eukaryota</taxon>
        <taxon>Fungi</taxon>
        <taxon>Dikarya</taxon>
        <taxon>Ascomycota</taxon>
        <taxon>Saccharomycotina</taxon>
        <taxon>Pichiomycetes</taxon>
        <taxon>Debaryomycetaceae</taxon>
        <taxon>Debaryomyces</taxon>
    </lineage>
</organism>
<dbReference type="EC" id="2.8.1.8" evidence="1"/>
<dbReference type="EMBL" id="CR382139">
    <property type="protein sequence ID" value="CAR65995.1"/>
    <property type="molecule type" value="Genomic_DNA"/>
</dbReference>
<dbReference type="RefSeq" id="XP_002770663.1">
    <property type="nucleotide sequence ID" value="XM_002770617.1"/>
</dbReference>
<dbReference type="SMR" id="B5RUV1"/>
<dbReference type="FunCoup" id="B5RUV1">
    <property type="interactions" value="618"/>
</dbReference>
<dbReference type="STRING" id="284592.B5RUV1"/>
<dbReference type="GeneID" id="8999246"/>
<dbReference type="KEGG" id="dha:DEHA2G18854g"/>
<dbReference type="VEuPathDB" id="FungiDB:DEHA2G18854g"/>
<dbReference type="eggNOG" id="KOG2672">
    <property type="taxonomic scope" value="Eukaryota"/>
</dbReference>
<dbReference type="HOGENOM" id="CLU_033144_2_0_1"/>
<dbReference type="InParanoid" id="B5RUV1"/>
<dbReference type="OMA" id="PYCDIDF"/>
<dbReference type="OrthoDB" id="3231at2759"/>
<dbReference type="UniPathway" id="UPA00538">
    <property type="reaction ID" value="UER00593"/>
</dbReference>
<dbReference type="Proteomes" id="UP000000599">
    <property type="component" value="Chromosome G"/>
</dbReference>
<dbReference type="GO" id="GO:0005739">
    <property type="term" value="C:mitochondrion"/>
    <property type="evidence" value="ECO:0007669"/>
    <property type="project" value="UniProtKB-SubCell"/>
</dbReference>
<dbReference type="GO" id="GO:0051539">
    <property type="term" value="F:4 iron, 4 sulfur cluster binding"/>
    <property type="evidence" value="ECO:0007669"/>
    <property type="project" value="UniProtKB-UniRule"/>
</dbReference>
<dbReference type="GO" id="GO:0016992">
    <property type="term" value="F:lipoate synthase activity"/>
    <property type="evidence" value="ECO:0007669"/>
    <property type="project" value="UniProtKB-UniRule"/>
</dbReference>
<dbReference type="GO" id="GO:0046872">
    <property type="term" value="F:metal ion binding"/>
    <property type="evidence" value="ECO:0007669"/>
    <property type="project" value="UniProtKB-KW"/>
</dbReference>
<dbReference type="CDD" id="cd01335">
    <property type="entry name" value="Radical_SAM"/>
    <property type="match status" value="1"/>
</dbReference>
<dbReference type="FunFam" id="3.20.20.70:FF:000036">
    <property type="entry name" value="Lipoyl synthase, mitochondrial"/>
    <property type="match status" value="1"/>
</dbReference>
<dbReference type="Gene3D" id="3.20.20.70">
    <property type="entry name" value="Aldolase class I"/>
    <property type="match status" value="1"/>
</dbReference>
<dbReference type="HAMAP" id="MF_00206">
    <property type="entry name" value="Lipoyl_synth"/>
    <property type="match status" value="1"/>
</dbReference>
<dbReference type="InterPro" id="IPR013785">
    <property type="entry name" value="Aldolase_TIM"/>
</dbReference>
<dbReference type="InterPro" id="IPR006638">
    <property type="entry name" value="Elp3/MiaA/NifB-like_rSAM"/>
</dbReference>
<dbReference type="InterPro" id="IPR031691">
    <property type="entry name" value="LIAS_N"/>
</dbReference>
<dbReference type="InterPro" id="IPR003698">
    <property type="entry name" value="Lipoyl_synth"/>
</dbReference>
<dbReference type="InterPro" id="IPR007197">
    <property type="entry name" value="rSAM"/>
</dbReference>
<dbReference type="NCBIfam" id="TIGR00510">
    <property type="entry name" value="lipA"/>
    <property type="match status" value="1"/>
</dbReference>
<dbReference type="NCBIfam" id="NF004019">
    <property type="entry name" value="PRK05481.1"/>
    <property type="match status" value="1"/>
</dbReference>
<dbReference type="NCBIfam" id="NF009544">
    <property type="entry name" value="PRK12928.1"/>
    <property type="match status" value="1"/>
</dbReference>
<dbReference type="PANTHER" id="PTHR10949">
    <property type="entry name" value="LIPOYL SYNTHASE"/>
    <property type="match status" value="1"/>
</dbReference>
<dbReference type="PANTHER" id="PTHR10949:SF0">
    <property type="entry name" value="LIPOYL SYNTHASE, MITOCHONDRIAL"/>
    <property type="match status" value="1"/>
</dbReference>
<dbReference type="Pfam" id="PF16881">
    <property type="entry name" value="LIAS_N"/>
    <property type="match status" value="1"/>
</dbReference>
<dbReference type="Pfam" id="PF04055">
    <property type="entry name" value="Radical_SAM"/>
    <property type="match status" value="1"/>
</dbReference>
<dbReference type="SFLD" id="SFLDF00271">
    <property type="entry name" value="lipoyl_synthase"/>
    <property type="match status" value="1"/>
</dbReference>
<dbReference type="SFLD" id="SFLDG01058">
    <property type="entry name" value="lipoyl_synthase_like"/>
    <property type="match status" value="1"/>
</dbReference>
<dbReference type="SMART" id="SM00729">
    <property type="entry name" value="Elp3"/>
    <property type="match status" value="1"/>
</dbReference>
<dbReference type="SUPFAM" id="SSF102114">
    <property type="entry name" value="Radical SAM enzymes"/>
    <property type="match status" value="1"/>
</dbReference>
<dbReference type="PROSITE" id="PS51918">
    <property type="entry name" value="RADICAL_SAM"/>
    <property type="match status" value="1"/>
</dbReference>
<reference key="1">
    <citation type="journal article" date="2004" name="Nature">
        <title>Genome evolution in yeasts.</title>
        <authorList>
            <person name="Dujon B."/>
            <person name="Sherman D."/>
            <person name="Fischer G."/>
            <person name="Durrens P."/>
            <person name="Casaregola S."/>
            <person name="Lafontaine I."/>
            <person name="de Montigny J."/>
            <person name="Marck C."/>
            <person name="Neuveglise C."/>
            <person name="Talla E."/>
            <person name="Goffard N."/>
            <person name="Frangeul L."/>
            <person name="Aigle M."/>
            <person name="Anthouard V."/>
            <person name="Babour A."/>
            <person name="Barbe V."/>
            <person name="Barnay S."/>
            <person name="Blanchin S."/>
            <person name="Beckerich J.-M."/>
            <person name="Beyne E."/>
            <person name="Bleykasten C."/>
            <person name="Boisrame A."/>
            <person name="Boyer J."/>
            <person name="Cattolico L."/>
            <person name="Confanioleri F."/>
            <person name="de Daruvar A."/>
            <person name="Despons L."/>
            <person name="Fabre E."/>
            <person name="Fairhead C."/>
            <person name="Ferry-Dumazet H."/>
            <person name="Groppi A."/>
            <person name="Hantraye F."/>
            <person name="Hennequin C."/>
            <person name="Jauniaux N."/>
            <person name="Joyet P."/>
            <person name="Kachouri R."/>
            <person name="Kerrest A."/>
            <person name="Koszul R."/>
            <person name="Lemaire M."/>
            <person name="Lesur I."/>
            <person name="Ma L."/>
            <person name="Muller H."/>
            <person name="Nicaud J.-M."/>
            <person name="Nikolski M."/>
            <person name="Oztas S."/>
            <person name="Ozier-Kalogeropoulos O."/>
            <person name="Pellenz S."/>
            <person name="Potier S."/>
            <person name="Richard G.-F."/>
            <person name="Straub M.-L."/>
            <person name="Suleau A."/>
            <person name="Swennen D."/>
            <person name="Tekaia F."/>
            <person name="Wesolowski-Louvel M."/>
            <person name="Westhof E."/>
            <person name="Wirth B."/>
            <person name="Zeniou-Meyer M."/>
            <person name="Zivanovic Y."/>
            <person name="Bolotin-Fukuhara M."/>
            <person name="Thierry A."/>
            <person name="Bouchier C."/>
            <person name="Caudron B."/>
            <person name="Scarpelli C."/>
            <person name="Gaillardin C."/>
            <person name="Weissenbach J."/>
            <person name="Wincker P."/>
            <person name="Souciet J.-L."/>
        </authorList>
    </citation>
    <scope>NUCLEOTIDE SEQUENCE [LARGE SCALE GENOMIC DNA]</scope>
    <source>
        <strain>ATCC 36239 / CBS 767 / BCRC 21394 / JCM 1990 / NBRC 0083 / IGC 2968</strain>
    </source>
</reference>
<sequence>MISLRSISRSPAVQPARIYRTLATADTSGINEQAKPKTKRKKTVFSDSLNKGPSFEDFVNGKAADMLVDPLEAARQDPNQRLPKWLKVPIPKGKSFNNLKNDVRELKLATVCEEAKCPNIGECWGGKKSEATATIMLMGDTCTRGCRFCSVKTSRAPAKPDPMEPENTAEAISRWGLGYVVLTTVDRDDLVDGGANHLAETVRKIKEKAPQILVEVLGGDFRGDLDMAAILARSGLDVYAHNIETVEALTPYVRDRRATYRQSLSILNKAKETKPSLVTKTSLMLGFGETDEQIMQTLKDLREIKCDVVTFGQYMRPTKRHMKVVDYVKPEKFDYWRDTALQMGFLYVASGPLVRSSYKAGEAFIENVIRKRRHNVGETPRLAQEVNPKIISQSI</sequence>
<feature type="transit peptide" description="Mitochondrion" evidence="1">
    <location>
        <begin position="1"/>
        <end position="14"/>
    </location>
</feature>
<feature type="chain" id="PRO_0000398266" description="Lipoyl synthase, mitochondrial">
    <location>
        <begin position="15"/>
        <end position="395"/>
    </location>
</feature>
<feature type="domain" description="Radical SAM core" evidence="2">
    <location>
        <begin position="127"/>
        <end position="346"/>
    </location>
</feature>
<feature type="binding site" evidence="1">
    <location>
        <position position="112"/>
    </location>
    <ligand>
        <name>[4Fe-4S] cluster</name>
        <dbReference type="ChEBI" id="CHEBI:49883"/>
        <label>1</label>
    </ligand>
</feature>
<feature type="binding site" evidence="1">
    <location>
        <position position="117"/>
    </location>
    <ligand>
        <name>[4Fe-4S] cluster</name>
        <dbReference type="ChEBI" id="CHEBI:49883"/>
        <label>1</label>
    </ligand>
</feature>
<feature type="binding site" evidence="1">
    <location>
        <position position="123"/>
    </location>
    <ligand>
        <name>[4Fe-4S] cluster</name>
        <dbReference type="ChEBI" id="CHEBI:49883"/>
        <label>1</label>
    </ligand>
</feature>
<feature type="binding site" evidence="1">
    <location>
        <position position="142"/>
    </location>
    <ligand>
        <name>[4Fe-4S] cluster</name>
        <dbReference type="ChEBI" id="CHEBI:49883"/>
        <label>2</label>
        <note>4Fe-4S-S-AdoMet</note>
    </ligand>
</feature>
<feature type="binding site" evidence="1">
    <location>
        <position position="146"/>
    </location>
    <ligand>
        <name>[4Fe-4S] cluster</name>
        <dbReference type="ChEBI" id="CHEBI:49883"/>
        <label>2</label>
        <note>4Fe-4S-S-AdoMet</note>
    </ligand>
</feature>
<feature type="binding site" evidence="1">
    <location>
        <position position="149"/>
    </location>
    <ligand>
        <name>[4Fe-4S] cluster</name>
        <dbReference type="ChEBI" id="CHEBI:49883"/>
        <label>2</label>
        <note>4Fe-4S-S-AdoMet</note>
    </ligand>
</feature>
<feature type="binding site" evidence="1">
    <location>
        <position position="357"/>
    </location>
    <ligand>
        <name>[4Fe-4S] cluster</name>
        <dbReference type="ChEBI" id="CHEBI:49883"/>
        <label>1</label>
    </ligand>
</feature>